<sequence length="298" mass="34385">MLGKLLQKVLKAYFVQQSPVEELLPDLNVIFTDSQNPPDFLTSLRRRGMEVEYPESAKIIFPKPEYWFRWEQRYVYEDVDKGEVFFLDGYGKLHEGIGSYEAQVFLNENREVVSVFYQRLAPYDTKWEKDREGWTWFLKGSGKLVFDTEIVSFDYPLVLGKRWRSEGRMGAMTVESRGVVIAYISPDGEVEVAEGYSYQPPVKPPEPLEALDFMGLDELLEVGKATTTWDKVVIPDGPRKGENVQGYYVTMVEYLLNGSLAMKMEIWKDVRGCVPVIAYHPAGMRTERQVLVARSWCL</sequence>
<proteinExistence type="predicted"/>
<reference key="1">
    <citation type="journal article" date="1997" name="Nature">
        <title>The complete genome sequence of the hyperthermophilic, sulphate-reducing archaeon Archaeoglobus fulgidus.</title>
        <authorList>
            <person name="Klenk H.-P."/>
            <person name="Clayton R.A."/>
            <person name="Tomb J.-F."/>
            <person name="White O."/>
            <person name="Nelson K.E."/>
            <person name="Ketchum K.A."/>
            <person name="Dodson R.J."/>
            <person name="Gwinn M.L."/>
            <person name="Hickey E.K."/>
            <person name="Peterson J.D."/>
            <person name="Richardson D.L."/>
            <person name="Kerlavage A.R."/>
            <person name="Graham D.E."/>
            <person name="Kyrpides N.C."/>
            <person name="Fleischmann R.D."/>
            <person name="Quackenbush J."/>
            <person name="Lee N.H."/>
            <person name="Sutton G.G."/>
            <person name="Gill S.R."/>
            <person name="Kirkness E.F."/>
            <person name="Dougherty B.A."/>
            <person name="McKenney K."/>
            <person name="Adams M.D."/>
            <person name="Loftus B.J."/>
            <person name="Peterson S.N."/>
            <person name="Reich C.I."/>
            <person name="McNeil L.K."/>
            <person name="Badger J.H."/>
            <person name="Glodek A."/>
            <person name="Zhou L."/>
            <person name="Overbeek R."/>
            <person name="Gocayne J.D."/>
            <person name="Weidman J.F."/>
            <person name="McDonald L.A."/>
            <person name="Utterback T.R."/>
            <person name="Cotton M.D."/>
            <person name="Spriggs T."/>
            <person name="Artiach P."/>
            <person name="Kaine B.P."/>
            <person name="Sykes S.M."/>
            <person name="Sadow P.W."/>
            <person name="D'Andrea K.P."/>
            <person name="Bowman C."/>
            <person name="Fujii C."/>
            <person name="Garland S.A."/>
            <person name="Mason T.M."/>
            <person name="Olsen G.J."/>
            <person name="Fraser C.M."/>
            <person name="Smith H.O."/>
            <person name="Woese C.R."/>
            <person name="Venter J.C."/>
        </authorList>
    </citation>
    <scope>NUCLEOTIDE SEQUENCE [LARGE SCALE GENOMIC DNA]</scope>
    <source>
        <strain>ATCC 49558 / DSM 4304 / JCM 9628 / NBRC 100126 / VC-16</strain>
    </source>
</reference>
<name>Y812_ARCFU</name>
<gene>
    <name type="ordered locus">AF_0812</name>
</gene>
<accession>O29446</accession>
<feature type="chain" id="PRO_0000127928" description="Uncharacterized protein AF_0812">
    <location>
        <begin position="1"/>
        <end position="298"/>
    </location>
</feature>
<keyword id="KW-1185">Reference proteome</keyword>
<protein>
    <recommendedName>
        <fullName>Uncharacterized protein AF_0812</fullName>
    </recommendedName>
</protein>
<organism>
    <name type="scientific">Archaeoglobus fulgidus (strain ATCC 49558 / DSM 4304 / JCM 9628 / NBRC 100126 / VC-16)</name>
    <dbReference type="NCBI Taxonomy" id="224325"/>
    <lineage>
        <taxon>Archaea</taxon>
        <taxon>Methanobacteriati</taxon>
        <taxon>Methanobacteriota</taxon>
        <taxon>Archaeoglobi</taxon>
        <taxon>Archaeoglobales</taxon>
        <taxon>Archaeoglobaceae</taxon>
        <taxon>Archaeoglobus</taxon>
    </lineage>
</organism>
<dbReference type="EMBL" id="AE000782">
    <property type="protein sequence ID" value="AAB90432.1"/>
    <property type="molecule type" value="Genomic_DNA"/>
</dbReference>
<dbReference type="PIR" id="D69351">
    <property type="entry name" value="D69351"/>
</dbReference>
<dbReference type="STRING" id="224325.AF_0812"/>
<dbReference type="PaxDb" id="224325-AF_0812"/>
<dbReference type="EnsemblBacteria" id="AAB90432">
    <property type="protein sequence ID" value="AAB90432"/>
    <property type="gene ID" value="AF_0812"/>
</dbReference>
<dbReference type="KEGG" id="afu:AF_0812"/>
<dbReference type="HOGENOM" id="CLU_932548_0_0_2"/>
<dbReference type="Proteomes" id="UP000002199">
    <property type="component" value="Chromosome"/>
</dbReference>